<dbReference type="EMBL" id="CP000546">
    <property type="protein sequence ID" value="ABN03878.1"/>
    <property type="molecule type" value="Genomic_DNA"/>
</dbReference>
<dbReference type="RefSeq" id="WP_004189237.1">
    <property type="nucleotide sequence ID" value="NC_008836.1"/>
</dbReference>
<dbReference type="SMR" id="A2S947"/>
<dbReference type="KEGG" id="bml:BMA10229_A2508"/>
<dbReference type="HOGENOM" id="CLU_099839_1_0_4"/>
<dbReference type="Proteomes" id="UP000002283">
    <property type="component" value="Chromosome I"/>
</dbReference>
<dbReference type="GO" id="GO:0005829">
    <property type="term" value="C:cytosol"/>
    <property type="evidence" value="ECO:0007669"/>
    <property type="project" value="TreeGrafter"/>
</dbReference>
<dbReference type="GO" id="GO:0000166">
    <property type="term" value="F:nucleotide binding"/>
    <property type="evidence" value="ECO:0007669"/>
    <property type="project" value="TreeGrafter"/>
</dbReference>
<dbReference type="CDD" id="cd11740">
    <property type="entry name" value="YajQ_like"/>
    <property type="match status" value="1"/>
</dbReference>
<dbReference type="Gene3D" id="3.30.70.860">
    <property type="match status" value="1"/>
</dbReference>
<dbReference type="Gene3D" id="3.30.70.990">
    <property type="entry name" value="YajQ-like, domain 2"/>
    <property type="match status" value="1"/>
</dbReference>
<dbReference type="HAMAP" id="MF_00632">
    <property type="entry name" value="YajQ"/>
    <property type="match status" value="1"/>
</dbReference>
<dbReference type="InterPro" id="IPR007551">
    <property type="entry name" value="DUF520"/>
</dbReference>
<dbReference type="InterPro" id="IPR035571">
    <property type="entry name" value="UPF0234-like_C"/>
</dbReference>
<dbReference type="InterPro" id="IPR035570">
    <property type="entry name" value="UPF0234_N"/>
</dbReference>
<dbReference type="InterPro" id="IPR036183">
    <property type="entry name" value="YajQ-like_sf"/>
</dbReference>
<dbReference type="NCBIfam" id="NF003819">
    <property type="entry name" value="PRK05412.1"/>
    <property type="match status" value="1"/>
</dbReference>
<dbReference type="PANTHER" id="PTHR30476">
    <property type="entry name" value="UPF0234 PROTEIN YAJQ"/>
    <property type="match status" value="1"/>
</dbReference>
<dbReference type="PANTHER" id="PTHR30476:SF0">
    <property type="entry name" value="UPF0234 PROTEIN YAJQ"/>
    <property type="match status" value="1"/>
</dbReference>
<dbReference type="Pfam" id="PF04461">
    <property type="entry name" value="DUF520"/>
    <property type="match status" value="1"/>
</dbReference>
<dbReference type="SUPFAM" id="SSF89963">
    <property type="entry name" value="YajQ-like"/>
    <property type="match status" value="2"/>
</dbReference>
<evidence type="ECO:0000255" key="1">
    <source>
        <dbReference type="HAMAP-Rule" id="MF_00632"/>
    </source>
</evidence>
<accession>A2S947</accession>
<comment type="function">
    <text evidence="1">Nucleotide-binding protein.</text>
</comment>
<comment type="similarity">
    <text evidence="1">Belongs to the YajQ family.</text>
</comment>
<reference key="1">
    <citation type="journal article" date="2010" name="Genome Biol. Evol.">
        <title>Continuing evolution of Burkholderia mallei through genome reduction and large-scale rearrangements.</title>
        <authorList>
            <person name="Losada L."/>
            <person name="Ronning C.M."/>
            <person name="DeShazer D."/>
            <person name="Woods D."/>
            <person name="Fedorova N."/>
            <person name="Kim H.S."/>
            <person name="Shabalina S.A."/>
            <person name="Pearson T.R."/>
            <person name="Brinkac L."/>
            <person name="Tan P."/>
            <person name="Nandi T."/>
            <person name="Crabtree J."/>
            <person name="Badger J."/>
            <person name="Beckstrom-Sternberg S."/>
            <person name="Saqib M."/>
            <person name="Schutzer S.E."/>
            <person name="Keim P."/>
            <person name="Nierman W.C."/>
        </authorList>
    </citation>
    <scope>NUCLEOTIDE SEQUENCE [LARGE SCALE GENOMIC DNA]</scope>
    <source>
        <strain>NCTC 10229</strain>
    </source>
</reference>
<name>Y4808_BURM9</name>
<keyword id="KW-0547">Nucleotide-binding</keyword>
<proteinExistence type="inferred from homology"/>
<gene>
    <name type="ordered locus">BMA10229_A2508</name>
</gene>
<organism>
    <name type="scientific">Burkholderia mallei (strain NCTC 10229)</name>
    <dbReference type="NCBI Taxonomy" id="412022"/>
    <lineage>
        <taxon>Bacteria</taxon>
        <taxon>Pseudomonadati</taxon>
        <taxon>Pseudomonadota</taxon>
        <taxon>Betaproteobacteria</taxon>
        <taxon>Burkholderiales</taxon>
        <taxon>Burkholderiaceae</taxon>
        <taxon>Burkholderia</taxon>
        <taxon>pseudomallei group</taxon>
    </lineage>
</organism>
<sequence length="161" mass="18036">MPSFDVVSEANMIEVKNAVEQSNKEISTRFDFKGSDARVEQKERELTLYADDDFKLGQVKDVLIGKMAKRNVDVRFLDYGKIEKIGGDKVKQVVTIKKGVSGDLAKKVVRIVKDSKIKVQASIQGDAVRVSGAKRDDLQSTIALLRKEVTDTPLDFNNFRD</sequence>
<protein>
    <recommendedName>
        <fullName evidence="1">Nucleotide-binding protein BMA10229_A2508</fullName>
    </recommendedName>
</protein>
<feature type="chain" id="PRO_1000051719" description="Nucleotide-binding protein BMA10229_A2508">
    <location>
        <begin position="1"/>
        <end position="161"/>
    </location>
</feature>